<evidence type="ECO:0000250" key="1">
    <source>
        <dbReference type="UniProtKB" id="P62753"/>
    </source>
</evidence>
<evidence type="ECO:0000256" key="2">
    <source>
        <dbReference type="SAM" id="MobiDB-lite"/>
    </source>
</evidence>
<evidence type="ECO:0000305" key="3"/>
<reference key="1">
    <citation type="journal article" date="1995" name="Biochem. Biophys. Res. Commun.">
        <title>Use of alternative polyadenylation sites by the chicken S6 ribosomal protein gene.</title>
        <authorList>
            <person name="Antoine M."/>
            <person name="Fried M."/>
        </authorList>
    </citation>
    <scope>NUCLEOTIDE SEQUENCE [MRNA]</scope>
    <source>
        <tissue>Liver</tissue>
    </source>
</reference>
<dbReference type="EMBL" id="X81968">
    <property type="protein sequence ID" value="CAA57493.1"/>
    <property type="molecule type" value="mRNA"/>
</dbReference>
<dbReference type="PIR" id="JC4145">
    <property type="entry name" value="JC4145"/>
</dbReference>
<dbReference type="RefSeq" id="NP_990556.1">
    <property type="nucleotide sequence ID" value="NM_205225.2"/>
</dbReference>
<dbReference type="PDB" id="8Q7Z">
    <property type="method" value="EM"/>
    <property type="resolution" value="2.50 A"/>
    <property type="chains" value="Af=1-249"/>
</dbReference>
<dbReference type="PDB" id="8Q87">
    <property type="method" value="EM"/>
    <property type="resolution" value="2.40 A"/>
    <property type="chains" value="Af=1-249"/>
</dbReference>
<dbReference type="PDBsum" id="8Q7Z"/>
<dbReference type="PDBsum" id="8Q87"/>
<dbReference type="SMR" id="P47838"/>
<dbReference type="FunCoup" id="P47838">
    <property type="interactions" value="2796"/>
</dbReference>
<dbReference type="STRING" id="9031.ENSGALP00000024283"/>
<dbReference type="iPTMnet" id="P47838"/>
<dbReference type="PaxDb" id="9031-ENSGALP00000024283"/>
<dbReference type="GeneID" id="396148"/>
<dbReference type="KEGG" id="gga:396148"/>
<dbReference type="CTD" id="6194"/>
<dbReference type="VEuPathDB" id="HostDB:geneid_396148"/>
<dbReference type="eggNOG" id="KOG1646">
    <property type="taxonomic scope" value="Eukaryota"/>
</dbReference>
<dbReference type="InParanoid" id="P47838"/>
<dbReference type="OMA" id="KPRYKAP"/>
<dbReference type="OrthoDB" id="10260596at2759"/>
<dbReference type="PhylomeDB" id="P47838"/>
<dbReference type="PRO" id="PR:P47838"/>
<dbReference type="Proteomes" id="UP000000539">
    <property type="component" value="Unassembled WGS sequence"/>
</dbReference>
<dbReference type="GO" id="GO:0022627">
    <property type="term" value="C:cytosolic small ribosomal subunit"/>
    <property type="evidence" value="ECO:0000250"/>
    <property type="project" value="AgBase"/>
</dbReference>
<dbReference type="GO" id="GO:0005730">
    <property type="term" value="C:nucleolus"/>
    <property type="evidence" value="ECO:0007669"/>
    <property type="project" value="UniProtKB-SubCell"/>
</dbReference>
<dbReference type="GO" id="GO:0005634">
    <property type="term" value="C:nucleus"/>
    <property type="evidence" value="ECO:0000250"/>
    <property type="project" value="AgBase"/>
</dbReference>
<dbReference type="GO" id="GO:0032040">
    <property type="term" value="C:small-subunit processome"/>
    <property type="evidence" value="ECO:0000250"/>
    <property type="project" value="UniProtKB"/>
</dbReference>
<dbReference type="GO" id="GO:0003735">
    <property type="term" value="F:structural constituent of ribosome"/>
    <property type="evidence" value="ECO:0007669"/>
    <property type="project" value="InterPro"/>
</dbReference>
<dbReference type="GO" id="GO:0002181">
    <property type="term" value="P:cytoplasmic translation"/>
    <property type="evidence" value="ECO:0000250"/>
    <property type="project" value="UniProtKB"/>
</dbReference>
<dbReference type="GO" id="GO:0042593">
    <property type="term" value="P:glucose homeostasis"/>
    <property type="evidence" value="ECO:0000250"/>
    <property type="project" value="AgBase"/>
</dbReference>
<dbReference type="GO" id="GO:0008284">
    <property type="term" value="P:positive regulation of cell population proliferation"/>
    <property type="evidence" value="ECO:0000250"/>
    <property type="project" value="UniProtKB"/>
</dbReference>
<dbReference type="GO" id="GO:0042274">
    <property type="term" value="P:ribosomal small subunit biogenesis"/>
    <property type="evidence" value="ECO:0000250"/>
    <property type="project" value="UniProtKB"/>
</dbReference>
<dbReference type="FunFam" id="1.20.5.2650:FF:000001">
    <property type="entry name" value="40S ribosomal protein S6"/>
    <property type="match status" value="1"/>
</dbReference>
<dbReference type="Gene3D" id="1.20.5.2650">
    <property type="match status" value="1"/>
</dbReference>
<dbReference type="InterPro" id="IPR001377">
    <property type="entry name" value="Ribosomal_eS6"/>
</dbReference>
<dbReference type="InterPro" id="IPR014401">
    <property type="entry name" value="Ribosomal_eS6-like"/>
</dbReference>
<dbReference type="InterPro" id="IPR018282">
    <property type="entry name" value="Ribosomal_eS6_CS"/>
</dbReference>
<dbReference type="PANTHER" id="PTHR11502">
    <property type="entry name" value="40S RIBOSOMAL PROTEIN S6"/>
    <property type="match status" value="1"/>
</dbReference>
<dbReference type="Pfam" id="PF01092">
    <property type="entry name" value="Ribosomal_S6e"/>
    <property type="match status" value="1"/>
</dbReference>
<dbReference type="PIRSF" id="PIRSF002129">
    <property type="entry name" value="Ribosom_S6_euk"/>
    <property type="match status" value="1"/>
</dbReference>
<dbReference type="SMART" id="SM01405">
    <property type="entry name" value="Ribosomal_S6e"/>
    <property type="match status" value="1"/>
</dbReference>
<dbReference type="PROSITE" id="PS00578">
    <property type="entry name" value="RIBOSOMAL_S6E"/>
    <property type="match status" value="1"/>
</dbReference>
<comment type="function">
    <text evidence="1">Component of the 40S small ribosomal subunit. Plays an important role in controlling cell growth and proliferation through the selective translation of particular classes of mRNA. Part of the small subunit (SSU) processome, first precursor of the small eukaryotic ribosomal subunit. During the assembly of the SSU processome in the nucleolus, many ribosome biogenesis factors, an RNA chaperone and ribosomal proteins associate with the nascent pre-rRNA and work in concert to generate RNA folding, modifications, rearrangements and cleavage as well as targeted degradation of pre-ribosomal RNA by the RNA exosome.</text>
</comment>
<comment type="subunit">
    <text evidence="1">Component of the small ribosomal subunit. Part of the small subunit (SSU) processome, composed of more than 70 proteins and the RNA chaperone small nucleolar RNA (snoRNA) U3.</text>
</comment>
<comment type="subcellular location">
    <subcellularLocation>
        <location evidence="1">Cytoplasm</location>
    </subcellularLocation>
    <subcellularLocation>
        <location evidence="1">Nucleus</location>
        <location evidence="1">Nucleolus</location>
    </subcellularLocation>
</comment>
<comment type="PTM">
    <text evidence="1">Ribosomal protein S6 is the major substrate of protein kinases in eukaryote ribosomes. The phosphorylation is stimulated by growth factors, tumor promoting agents, and mitogens. It is dephosphorylated at growth arrest.</text>
</comment>
<comment type="similarity">
    <text evidence="3">Belongs to the eukaryotic ribosomal protein eS6 family.</text>
</comment>
<accession>P47838</accession>
<protein>
    <recommendedName>
        <fullName evidence="3">Small ribosomal subunit protein eS6</fullName>
    </recommendedName>
    <alternativeName>
        <fullName>40S ribosomal protein S6</fullName>
    </alternativeName>
</protein>
<name>RS6_CHICK</name>
<feature type="chain" id="PRO_0000137315" description="Small ribosomal subunit protein eS6">
    <location>
        <begin position="1"/>
        <end position="249"/>
    </location>
</feature>
<feature type="region of interest" description="Disordered" evidence="2">
    <location>
        <begin position="216"/>
        <end position="249"/>
    </location>
</feature>
<feature type="compositionally biased region" description="Basic and acidic residues" evidence="2">
    <location>
        <begin position="216"/>
        <end position="229"/>
    </location>
</feature>
<feature type="compositionally biased region" description="Low complexity" evidence="2">
    <location>
        <begin position="236"/>
        <end position="249"/>
    </location>
</feature>
<feature type="modified residue" description="Phosphoserine" evidence="1">
    <location>
        <position position="235"/>
    </location>
</feature>
<feature type="modified residue" description="Phosphoserine" evidence="1">
    <location>
        <position position="236"/>
    </location>
</feature>
<feature type="modified residue" description="Phosphoserine" evidence="1">
    <location>
        <position position="240"/>
    </location>
</feature>
<feature type="modified residue" description="Phosphoserine" evidence="1">
    <location>
        <position position="244"/>
    </location>
</feature>
<feature type="modified residue" description="Phosphoserine" evidence="1">
    <location>
        <position position="247"/>
    </location>
</feature>
<keyword id="KW-0002">3D-structure</keyword>
<keyword id="KW-0963">Cytoplasm</keyword>
<keyword id="KW-0539">Nucleus</keyword>
<keyword id="KW-0597">Phosphoprotein</keyword>
<keyword id="KW-1185">Reference proteome</keyword>
<keyword id="KW-0687">Ribonucleoprotein</keyword>
<keyword id="KW-0689">Ribosomal protein</keyword>
<organism>
    <name type="scientific">Gallus gallus</name>
    <name type="common">Chicken</name>
    <dbReference type="NCBI Taxonomy" id="9031"/>
    <lineage>
        <taxon>Eukaryota</taxon>
        <taxon>Metazoa</taxon>
        <taxon>Chordata</taxon>
        <taxon>Craniata</taxon>
        <taxon>Vertebrata</taxon>
        <taxon>Euteleostomi</taxon>
        <taxon>Archelosauria</taxon>
        <taxon>Archosauria</taxon>
        <taxon>Dinosauria</taxon>
        <taxon>Saurischia</taxon>
        <taxon>Theropoda</taxon>
        <taxon>Coelurosauria</taxon>
        <taxon>Aves</taxon>
        <taxon>Neognathae</taxon>
        <taxon>Galloanserae</taxon>
        <taxon>Galliformes</taxon>
        <taxon>Phasianidae</taxon>
        <taxon>Phasianinae</taxon>
        <taxon>Gallus</taxon>
    </lineage>
</organism>
<gene>
    <name type="primary">RPS6</name>
</gene>
<proteinExistence type="evidence at protein level"/>
<sequence length="249" mass="28654">MKLNISFPATGCQKLIEVDDERNVRTFYEKRMATEVAADSLGEEWKGYVVRISGGNDKQGFPMKQGVLTHGRVRLLLSKGHSCYRPRRTGERKRKSVRGCIVDANLSVLNLVIVKKGEKDIPGLTDTTVPRRLGPKRASRIRKLFNLSKEDDVRQYVVRKPLNKEGKKPRTKAPKIQRLVTPRVLQHKRRRIALKKQRTQKNKEEAADYAKLLAKRMKEAKEKRQEQIAKRRRLSSLRASTSKSESSQK</sequence>